<evidence type="ECO:0000255" key="1">
    <source>
        <dbReference type="HAMAP-Rule" id="MF_01197"/>
    </source>
</evidence>
<evidence type="ECO:0000256" key="2">
    <source>
        <dbReference type="SAM" id="MobiDB-lite"/>
    </source>
</evidence>
<gene>
    <name evidence="1" type="primary">sepF</name>
    <name type="ordered locus">Mflv_2994</name>
</gene>
<keyword id="KW-0131">Cell cycle</keyword>
<keyword id="KW-0132">Cell division</keyword>
<keyword id="KW-0963">Cytoplasm</keyword>
<keyword id="KW-0717">Septation</keyword>
<dbReference type="EMBL" id="CP000656">
    <property type="protein sequence ID" value="ABP45471.1"/>
    <property type="molecule type" value="Genomic_DNA"/>
</dbReference>
<dbReference type="SMR" id="A4TBE2"/>
<dbReference type="STRING" id="350054.Mflv_2994"/>
<dbReference type="KEGG" id="mgi:Mflv_2994"/>
<dbReference type="eggNOG" id="COG1799">
    <property type="taxonomic scope" value="Bacteria"/>
</dbReference>
<dbReference type="HOGENOM" id="CLU_078499_0_0_11"/>
<dbReference type="OrthoDB" id="3731101at2"/>
<dbReference type="GO" id="GO:0005737">
    <property type="term" value="C:cytoplasm"/>
    <property type="evidence" value="ECO:0007669"/>
    <property type="project" value="UniProtKB-SubCell"/>
</dbReference>
<dbReference type="GO" id="GO:0000917">
    <property type="term" value="P:division septum assembly"/>
    <property type="evidence" value="ECO:0007669"/>
    <property type="project" value="UniProtKB-KW"/>
</dbReference>
<dbReference type="GO" id="GO:0043093">
    <property type="term" value="P:FtsZ-dependent cytokinesis"/>
    <property type="evidence" value="ECO:0007669"/>
    <property type="project" value="UniProtKB-UniRule"/>
</dbReference>
<dbReference type="FunFam" id="3.30.110.150:FF:000001">
    <property type="entry name" value="Cell division protein SepF"/>
    <property type="match status" value="1"/>
</dbReference>
<dbReference type="Gene3D" id="3.30.110.150">
    <property type="entry name" value="SepF-like protein"/>
    <property type="match status" value="1"/>
</dbReference>
<dbReference type="HAMAP" id="MF_01197">
    <property type="entry name" value="SepF"/>
    <property type="match status" value="1"/>
</dbReference>
<dbReference type="InterPro" id="IPR023052">
    <property type="entry name" value="Cell_div_SepF"/>
</dbReference>
<dbReference type="InterPro" id="IPR007561">
    <property type="entry name" value="Cell_div_SepF/SepF-rel"/>
</dbReference>
<dbReference type="InterPro" id="IPR038594">
    <property type="entry name" value="SepF-like_sf"/>
</dbReference>
<dbReference type="PANTHER" id="PTHR35798">
    <property type="entry name" value="CELL DIVISION PROTEIN SEPF"/>
    <property type="match status" value="1"/>
</dbReference>
<dbReference type="PANTHER" id="PTHR35798:SF1">
    <property type="entry name" value="CELL DIVISION PROTEIN SEPF"/>
    <property type="match status" value="1"/>
</dbReference>
<dbReference type="Pfam" id="PF04472">
    <property type="entry name" value="SepF"/>
    <property type="match status" value="1"/>
</dbReference>
<reference key="1">
    <citation type="submission" date="2007-04" db="EMBL/GenBank/DDBJ databases">
        <title>Complete sequence of chromosome of Mycobacterium gilvum PYR-GCK.</title>
        <authorList>
            <consortium name="US DOE Joint Genome Institute"/>
            <person name="Copeland A."/>
            <person name="Lucas S."/>
            <person name="Lapidus A."/>
            <person name="Barry K."/>
            <person name="Detter J.C."/>
            <person name="Glavina del Rio T."/>
            <person name="Hammon N."/>
            <person name="Israni S."/>
            <person name="Dalin E."/>
            <person name="Tice H."/>
            <person name="Pitluck S."/>
            <person name="Chain P."/>
            <person name="Malfatti S."/>
            <person name="Shin M."/>
            <person name="Vergez L."/>
            <person name="Schmutz J."/>
            <person name="Larimer F."/>
            <person name="Land M."/>
            <person name="Hauser L."/>
            <person name="Kyrpides N."/>
            <person name="Mikhailova N."/>
            <person name="Miller C."/>
            <person name="Richardson P."/>
        </authorList>
    </citation>
    <scope>NUCLEOTIDE SEQUENCE [LARGE SCALE GENOMIC DNA]</scope>
    <source>
        <strain>PYR-GCK</strain>
    </source>
</reference>
<comment type="function">
    <text evidence="1">Cell division protein that is part of the divisome complex and is recruited early to the Z-ring. Probably stimulates Z-ring formation, perhaps through the cross-linking of FtsZ protofilaments. Its function overlaps with FtsA.</text>
</comment>
<comment type="subunit">
    <text evidence="1">Homodimer. Interacts with FtsZ.</text>
</comment>
<comment type="subcellular location">
    <subcellularLocation>
        <location evidence="1">Cytoplasm</location>
    </subcellularLocation>
    <text evidence="1">Localizes to the division site, in a FtsZ-dependent manner.</text>
</comment>
<comment type="similarity">
    <text evidence="1">Belongs to the SepF family.</text>
</comment>
<sequence length="224" mass="25265">MSTLHKVKAYFGMAPMDEYEDDYYEDDDRGPAPRGYRRPREDRFEDEGYAPRGYDGHPEDRRRDYDEPPAYRAGLAGGMPGGFDDARFEARMRAPREFDRTPPRFGAMRGSTRGALAMDPRGMAELFEAGSPLAKITTLRPKDYSEARTIGERFRDGTPVIMDLVSMDNADAKRLVDFAAGLAFALRGSFDKVATKVFLLSPADVDVTAEQRRRIAEAGFYSYQ</sequence>
<accession>A4TBE2</accession>
<proteinExistence type="inferred from homology"/>
<organism>
    <name type="scientific">Mycolicibacterium gilvum (strain PYR-GCK)</name>
    <name type="common">Mycobacterium gilvum (strain PYR-GCK)</name>
    <dbReference type="NCBI Taxonomy" id="350054"/>
    <lineage>
        <taxon>Bacteria</taxon>
        <taxon>Bacillati</taxon>
        <taxon>Actinomycetota</taxon>
        <taxon>Actinomycetes</taxon>
        <taxon>Mycobacteriales</taxon>
        <taxon>Mycobacteriaceae</taxon>
        <taxon>Mycolicibacterium</taxon>
    </lineage>
</organism>
<protein>
    <recommendedName>
        <fullName evidence="1">Cell division protein SepF</fullName>
    </recommendedName>
</protein>
<name>SEPF_MYCGI</name>
<feature type="chain" id="PRO_0000334040" description="Cell division protein SepF">
    <location>
        <begin position="1"/>
        <end position="224"/>
    </location>
</feature>
<feature type="region of interest" description="Disordered" evidence="2">
    <location>
        <begin position="21"/>
        <end position="78"/>
    </location>
</feature>
<feature type="compositionally biased region" description="Basic and acidic residues" evidence="2">
    <location>
        <begin position="54"/>
        <end position="66"/>
    </location>
</feature>